<sequence>SPAVQEKAAWPELVGKTPEEARAQILLDKPNANVVVLEHHD</sequence>
<comment type="function">
    <text evidence="1 2">Inhibits chymotrypsin.</text>
</comment>
<comment type="mass spectrometry"/>
<comment type="similarity">
    <text evidence="2">Belongs to the protease inhibitor I13 (potato type I serine protease inhibitor) family.</text>
</comment>
<protein>
    <recommendedName>
        <fullName>Chymotrypsin inhibitor</fullName>
    </recommendedName>
    <alternativeName>
        <fullName>EHCI</fullName>
    </alternativeName>
</protein>
<accession>P83830</accession>
<proteinExistence type="evidence at protein level"/>
<evidence type="ECO:0000269" key="1">
    <source ref="1"/>
</evidence>
<evidence type="ECO:0000305" key="2"/>
<dbReference type="SMR" id="P83830"/>
<dbReference type="GO" id="GO:0004867">
    <property type="term" value="F:serine-type endopeptidase inhibitor activity"/>
    <property type="evidence" value="ECO:0007669"/>
    <property type="project" value="UniProtKB-KW"/>
</dbReference>
<dbReference type="GO" id="GO:0009611">
    <property type="term" value="P:response to wounding"/>
    <property type="evidence" value="ECO:0007669"/>
    <property type="project" value="InterPro"/>
</dbReference>
<dbReference type="Gene3D" id="3.30.10.10">
    <property type="entry name" value="Trypsin Inhibitor V, subunit A"/>
    <property type="match status" value="1"/>
</dbReference>
<dbReference type="InterPro" id="IPR000864">
    <property type="entry name" value="Prot_inh_pot1"/>
</dbReference>
<dbReference type="InterPro" id="IPR036354">
    <property type="entry name" value="Prot_inh_pot1_sf"/>
</dbReference>
<dbReference type="Pfam" id="PF00280">
    <property type="entry name" value="potato_inhibit"/>
    <property type="match status" value="1"/>
</dbReference>
<dbReference type="SUPFAM" id="SSF54654">
    <property type="entry name" value="CI-2 family of serine protease inhibitors"/>
    <property type="match status" value="1"/>
</dbReference>
<organism evidence="2">
    <name type="scientific">Eisenia hortensis</name>
    <name type="common">European nightcrawler</name>
    <name type="synonym">Dendrobaena veneta</name>
    <dbReference type="NCBI Taxonomy" id="265212"/>
    <lineage>
        <taxon>Eukaryota</taxon>
        <taxon>Metazoa</taxon>
        <taxon>Spiralia</taxon>
        <taxon>Lophotrochozoa</taxon>
        <taxon>Annelida</taxon>
        <taxon>Clitellata</taxon>
        <taxon>Oligochaeta</taxon>
        <taxon>Crassiclitellata</taxon>
        <taxon>Lumbricina</taxon>
        <taxon>Lumbricidae</taxon>
        <taxon>Lumbricinae</taxon>
        <taxon>Eisenia</taxon>
    </lineage>
</organism>
<reference evidence="2" key="1">
    <citation type="submission" date="2004-03" db="UniProtKB">
        <authorList>
            <person name="Wojtaszek J."/>
            <person name="Wilusz T."/>
        </authorList>
    </citation>
    <scope>PROTEIN SEQUENCE</scope>
    <scope>FUNCTION</scope>
    <scope>MASS SPECTROMETRY</scope>
</reference>
<name>ICI_EISHO</name>
<feature type="chain" id="PRO_0000217643" description="Chymotrypsin inhibitor">
    <location>
        <begin position="1"/>
        <end position="41" status="greater than"/>
    </location>
</feature>
<feature type="non-terminal residue" evidence="2">
    <location>
        <position position="41"/>
    </location>
</feature>
<keyword id="KW-0903">Direct protein sequencing</keyword>
<keyword id="KW-0646">Protease inhibitor</keyword>
<keyword id="KW-0722">Serine protease inhibitor</keyword>